<organism>
    <name type="scientific">Homo sapiens</name>
    <name type="common">Human</name>
    <dbReference type="NCBI Taxonomy" id="9606"/>
    <lineage>
        <taxon>Eukaryota</taxon>
        <taxon>Metazoa</taxon>
        <taxon>Chordata</taxon>
        <taxon>Craniata</taxon>
        <taxon>Vertebrata</taxon>
        <taxon>Euteleostomi</taxon>
        <taxon>Mammalia</taxon>
        <taxon>Eutheria</taxon>
        <taxon>Euarchontoglires</taxon>
        <taxon>Primates</taxon>
        <taxon>Haplorrhini</taxon>
        <taxon>Catarrhini</taxon>
        <taxon>Hominidae</taxon>
        <taxon>Homo</taxon>
    </lineage>
</organism>
<evidence type="ECO:0000305" key="1"/>
<evidence type="ECO:0000312" key="2">
    <source>
        <dbReference type="HGNC" id="HGNC:31706"/>
    </source>
</evidence>
<name>NP1L6_HUMAN</name>
<sequence length="107" mass="12045">MMEGLGEHSTAGEMGPLLGAVAATASPQSLMEYSSDADFIESLPLVVKYRVYTLKKLQAKCAVLEAKYLREFHSVERKFATIYGPLLEKRRQITNALYEPTKEECER</sequence>
<reference key="1">
    <citation type="journal article" date="2004" name="Nat. Genet.">
        <title>Complete sequencing and characterization of 21,243 full-length human cDNAs.</title>
        <authorList>
            <person name="Ota T."/>
            <person name="Suzuki Y."/>
            <person name="Nishikawa T."/>
            <person name="Otsuki T."/>
            <person name="Sugiyama T."/>
            <person name="Irie R."/>
            <person name="Wakamatsu A."/>
            <person name="Hayashi K."/>
            <person name="Sato H."/>
            <person name="Nagai K."/>
            <person name="Kimura K."/>
            <person name="Makita H."/>
            <person name="Sekine M."/>
            <person name="Obayashi M."/>
            <person name="Nishi T."/>
            <person name="Shibahara T."/>
            <person name="Tanaka T."/>
            <person name="Ishii S."/>
            <person name="Yamamoto J."/>
            <person name="Saito K."/>
            <person name="Kawai Y."/>
            <person name="Isono Y."/>
            <person name="Nakamura Y."/>
            <person name="Nagahari K."/>
            <person name="Murakami K."/>
            <person name="Yasuda T."/>
            <person name="Iwayanagi T."/>
            <person name="Wagatsuma M."/>
            <person name="Shiratori A."/>
            <person name="Sudo H."/>
            <person name="Hosoiri T."/>
            <person name="Kaku Y."/>
            <person name="Kodaira H."/>
            <person name="Kondo H."/>
            <person name="Sugawara M."/>
            <person name="Takahashi M."/>
            <person name="Kanda K."/>
            <person name="Yokoi T."/>
            <person name="Furuya T."/>
            <person name="Kikkawa E."/>
            <person name="Omura Y."/>
            <person name="Abe K."/>
            <person name="Kamihara K."/>
            <person name="Katsuta N."/>
            <person name="Sato K."/>
            <person name="Tanikawa M."/>
            <person name="Yamazaki M."/>
            <person name="Ninomiya K."/>
            <person name="Ishibashi T."/>
            <person name="Yamashita H."/>
            <person name="Murakawa K."/>
            <person name="Fujimori K."/>
            <person name="Tanai H."/>
            <person name="Kimata M."/>
            <person name="Watanabe M."/>
            <person name="Hiraoka S."/>
            <person name="Chiba Y."/>
            <person name="Ishida S."/>
            <person name="Ono Y."/>
            <person name="Takiguchi S."/>
            <person name="Watanabe S."/>
            <person name="Yosida M."/>
            <person name="Hotuta T."/>
            <person name="Kusano J."/>
            <person name="Kanehori K."/>
            <person name="Takahashi-Fujii A."/>
            <person name="Hara H."/>
            <person name="Tanase T.-O."/>
            <person name="Nomura Y."/>
            <person name="Togiya S."/>
            <person name="Komai F."/>
            <person name="Hara R."/>
            <person name="Takeuchi K."/>
            <person name="Arita M."/>
            <person name="Imose N."/>
            <person name="Musashino K."/>
            <person name="Yuuki H."/>
            <person name="Oshima A."/>
            <person name="Sasaki N."/>
            <person name="Aotsuka S."/>
            <person name="Yoshikawa Y."/>
            <person name="Matsunawa H."/>
            <person name="Ichihara T."/>
            <person name="Shiohata N."/>
            <person name="Sano S."/>
            <person name="Moriya S."/>
            <person name="Momiyama H."/>
            <person name="Satoh N."/>
            <person name="Takami S."/>
            <person name="Terashima Y."/>
            <person name="Suzuki O."/>
            <person name="Nakagawa S."/>
            <person name="Senoh A."/>
            <person name="Mizoguchi H."/>
            <person name="Goto Y."/>
            <person name="Shimizu F."/>
            <person name="Wakebe H."/>
            <person name="Hishigaki H."/>
            <person name="Watanabe T."/>
            <person name="Sugiyama A."/>
            <person name="Takemoto M."/>
            <person name="Kawakami B."/>
            <person name="Yamazaki M."/>
            <person name="Watanabe K."/>
            <person name="Kumagai A."/>
            <person name="Itakura S."/>
            <person name="Fukuzumi Y."/>
            <person name="Fujimori Y."/>
            <person name="Komiyama M."/>
            <person name="Tashiro H."/>
            <person name="Tanigami A."/>
            <person name="Fujiwara T."/>
            <person name="Ono T."/>
            <person name="Yamada K."/>
            <person name="Fujii Y."/>
            <person name="Ozaki K."/>
            <person name="Hirao M."/>
            <person name="Ohmori Y."/>
            <person name="Kawabata A."/>
            <person name="Hikiji T."/>
            <person name="Kobatake N."/>
            <person name="Inagaki H."/>
            <person name="Ikema Y."/>
            <person name="Okamoto S."/>
            <person name="Okitani R."/>
            <person name="Kawakami T."/>
            <person name="Noguchi S."/>
            <person name="Itoh T."/>
            <person name="Shigeta K."/>
            <person name="Senba T."/>
            <person name="Matsumura K."/>
            <person name="Nakajima Y."/>
            <person name="Mizuno T."/>
            <person name="Morinaga M."/>
            <person name="Sasaki M."/>
            <person name="Togashi T."/>
            <person name="Oyama M."/>
            <person name="Hata H."/>
            <person name="Watanabe M."/>
            <person name="Komatsu T."/>
            <person name="Mizushima-Sugano J."/>
            <person name="Satoh T."/>
            <person name="Shirai Y."/>
            <person name="Takahashi Y."/>
            <person name="Nakagawa K."/>
            <person name="Okumura K."/>
            <person name="Nagase T."/>
            <person name="Nomura N."/>
            <person name="Kikuchi H."/>
            <person name="Masuho Y."/>
            <person name="Yamashita R."/>
            <person name="Nakai K."/>
            <person name="Yada T."/>
            <person name="Nakamura Y."/>
            <person name="Ohara O."/>
            <person name="Isogai T."/>
            <person name="Sugano S."/>
        </authorList>
    </citation>
    <scope>NUCLEOTIDE SEQUENCE [LARGE SCALE MRNA]</scope>
    <source>
        <tissue>Amygdala</tissue>
    </source>
</reference>
<reference key="2">
    <citation type="journal article" date="2005" name="Nature">
        <title>The DNA sequence of the human X chromosome.</title>
        <authorList>
            <person name="Ross M.T."/>
            <person name="Grafham D.V."/>
            <person name="Coffey A.J."/>
            <person name="Scherer S."/>
            <person name="McLay K."/>
            <person name="Muzny D."/>
            <person name="Platzer M."/>
            <person name="Howell G.R."/>
            <person name="Burrows C."/>
            <person name="Bird C.P."/>
            <person name="Frankish A."/>
            <person name="Lovell F.L."/>
            <person name="Howe K.L."/>
            <person name="Ashurst J.L."/>
            <person name="Fulton R.S."/>
            <person name="Sudbrak R."/>
            <person name="Wen G."/>
            <person name="Jones M.C."/>
            <person name="Hurles M.E."/>
            <person name="Andrews T.D."/>
            <person name="Scott C.E."/>
            <person name="Searle S."/>
            <person name="Ramser J."/>
            <person name="Whittaker A."/>
            <person name="Deadman R."/>
            <person name="Carter N.P."/>
            <person name="Hunt S.E."/>
            <person name="Chen R."/>
            <person name="Cree A."/>
            <person name="Gunaratne P."/>
            <person name="Havlak P."/>
            <person name="Hodgson A."/>
            <person name="Metzker M.L."/>
            <person name="Richards S."/>
            <person name="Scott G."/>
            <person name="Steffen D."/>
            <person name="Sodergren E."/>
            <person name="Wheeler D.A."/>
            <person name="Worley K.C."/>
            <person name="Ainscough R."/>
            <person name="Ambrose K.D."/>
            <person name="Ansari-Lari M.A."/>
            <person name="Aradhya S."/>
            <person name="Ashwell R.I."/>
            <person name="Babbage A.K."/>
            <person name="Bagguley C.L."/>
            <person name="Ballabio A."/>
            <person name="Banerjee R."/>
            <person name="Barker G.E."/>
            <person name="Barlow K.F."/>
            <person name="Barrett I.P."/>
            <person name="Bates K.N."/>
            <person name="Beare D.M."/>
            <person name="Beasley H."/>
            <person name="Beasley O."/>
            <person name="Beck A."/>
            <person name="Bethel G."/>
            <person name="Blechschmidt K."/>
            <person name="Brady N."/>
            <person name="Bray-Allen S."/>
            <person name="Bridgeman A.M."/>
            <person name="Brown A.J."/>
            <person name="Brown M.J."/>
            <person name="Bonnin D."/>
            <person name="Bruford E.A."/>
            <person name="Buhay C."/>
            <person name="Burch P."/>
            <person name="Burford D."/>
            <person name="Burgess J."/>
            <person name="Burrill W."/>
            <person name="Burton J."/>
            <person name="Bye J.M."/>
            <person name="Carder C."/>
            <person name="Carrel L."/>
            <person name="Chako J."/>
            <person name="Chapman J.C."/>
            <person name="Chavez D."/>
            <person name="Chen E."/>
            <person name="Chen G."/>
            <person name="Chen Y."/>
            <person name="Chen Z."/>
            <person name="Chinault C."/>
            <person name="Ciccodicola A."/>
            <person name="Clark S.Y."/>
            <person name="Clarke G."/>
            <person name="Clee C.M."/>
            <person name="Clegg S."/>
            <person name="Clerc-Blankenburg K."/>
            <person name="Clifford K."/>
            <person name="Cobley V."/>
            <person name="Cole C.G."/>
            <person name="Conquer J.S."/>
            <person name="Corby N."/>
            <person name="Connor R.E."/>
            <person name="David R."/>
            <person name="Davies J."/>
            <person name="Davis C."/>
            <person name="Davis J."/>
            <person name="Delgado O."/>
            <person name="Deshazo D."/>
            <person name="Dhami P."/>
            <person name="Ding Y."/>
            <person name="Dinh H."/>
            <person name="Dodsworth S."/>
            <person name="Draper H."/>
            <person name="Dugan-Rocha S."/>
            <person name="Dunham A."/>
            <person name="Dunn M."/>
            <person name="Durbin K.J."/>
            <person name="Dutta I."/>
            <person name="Eades T."/>
            <person name="Ellwood M."/>
            <person name="Emery-Cohen A."/>
            <person name="Errington H."/>
            <person name="Evans K.L."/>
            <person name="Faulkner L."/>
            <person name="Francis F."/>
            <person name="Frankland J."/>
            <person name="Fraser A.E."/>
            <person name="Galgoczy P."/>
            <person name="Gilbert J."/>
            <person name="Gill R."/>
            <person name="Gloeckner G."/>
            <person name="Gregory S.G."/>
            <person name="Gribble S."/>
            <person name="Griffiths C."/>
            <person name="Grocock R."/>
            <person name="Gu Y."/>
            <person name="Gwilliam R."/>
            <person name="Hamilton C."/>
            <person name="Hart E.A."/>
            <person name="Hawes A."/>
            <person name="Heath P.D."/>
            <person name="Heitmann K."/>
            <person name="Hennig S."/>
            <person name="Hernandez J."/>
            <person name="Hinzmann B."/>
            <person name="Ho S."/>
            <person name="Hoffs M."/>
            <person name="Howden P.J."/>
            <person name="Huckle E.J."/>
            <person name="Hume J."/>
            <person name="Hunt P.J."/>
            <person name="Hunt A.R."/>
            <person name="Isherwood J."/>
            <person name="Jacob L."/>
            <person name="Johnson D."/>
            <person name="Jones S."/>
            <person name="de Jong P.J."/>
            <person name="Joseph S.S."/>
            <person name="Keenan S."/>
            <person name="Kelly S."/>
            <person name="Kershaw J.K."/>
            <person name="Khan Z."/>
            <person name="Kioschis P."/>
            <person name="Klages S."/>
            <person name="Knights A.J."/>
            <person name="Kosiura A."/>
            <person name="Kovar-Smith C."/>
            <person name="Laird G.K."/>
            <person name="Langford C."/>
            <person name="Lawlor S."/>
            <person name="Leversha M."/>
            <person name="Lewis L."/>
            <person name="Liu W."/>
            <person name="Lloyd C."/>
            <person name="Lloyd D.M."/>
            <person name="Loulseged H."/>
            <person name="Loveland J.E."/>
            <person name="Lovell J.D."/>
            <person name="Lozado R."/>
            <person name="Lu J."/>
            <person name="Lyne R."/>
            <person name="Ma J."/>
            <person name="Maheshwari M."/>
            <person name="Matthews L.H."/>
            <person name="McDowall J."/>
            <person name="McLaren S."/>
            <person name="McMurray A."/>
            <person name="Meidl P."/>
            <person name="Meitinger T."/>
            <person name="Milne S."/>
            <person name="Miner G."/>
            <person name="Mistry S.L."/>
            <person name="Morgan M."/>
            <person name="Morris S."/>
            <person name="Mueller I."/>
            <person name="Mullikin J.C."/>
            <person name="Nguyen N."/>
            <person name="Nordsiek G."/>
            <person name="Nyakatura G."/>
            <person name="O'dell C.N."/>
            <person name="Okwuonu G."/>
            <person name="Palmer S."/>
            <person name="Pandian R."/>
            <person name="Parker D."/>
            <person name="Parrish J."/>
            <person name="Pasternak S."/>
            <person name="Patel D."/>
            <person name="Pearce A.V."/>
            <person name="Pearson D.M."/>
            <person name="Pelan S.E."/>
            <person name="Perez L."/>
            <person name="Porter K.M."/>
            <person name="Ramsey Y."/>
            <person name="Reichwald K."/>
            <person name="Rhodes S."/>
            <person name="Ridler K.A."/>
            <person name="Schlessinger D."/>
            <person name="Schueler M.G."/>
            <person name="Sehra H.K."/>
            <person name="Shaw-Smith C."/>
            <person name="Shen H."/>
            <person name="Sheridan E.M."/>
            <person name="Shownkeen R."/>
            <person name="Skuce C.D."/>
            <person name="Smith M.L."/>
            <person name="Sotheran E.C."/>
            <person name="Steingruber H.E."/>
            <person name="Steward C.A."/>
            <person name="Storey R."/>
            <person name="Swann R.M."/>
            <person name="Swarbreck D."/>
            <person name="Tabor P.E."/>
            <person name="Taudien S."/>
            <person name="Taylor T."/>
            <person name="Teague B."/>
            <person name="Thomas K."/>
            <person name="Thorpe A."/>
            <person name="Timms K."/>
            <person name="Tracey A."/>
            <person name="Trevanion S."/>
            <person name="Tromans A.C."/>
            <person name="d'Urso M."/>
            <person name="Verduzco D."/>
            <person name="Villasana D."/>
            <person name="Waldron L."/>
            <person name="Wall M."/>
            <person name="Wang Q."/>
            <person name="Warren J."/>
            <person name="Warry G.L."/>
            <person name="Wei X."/>
            <person name="West A."/>
            <person name="Whitehead S.L."/>
            <person name="Whiteley M.N."/>
            <person name="Wilkinson J.E."/>
            <person name="Willey D.L."/>
            <person name="Williams G."/>
            <person name="Williams L."/>
            <person name="Williamson A."/>
            <person name="Williamson H."/>
            <person name="Wilming L."/>
            <person name="Woodmansey R.L."/>
            <person name="Wray P.W."/>
            <person name="Yen J."/>
            <person name="Zhang J."/>
            <person name="Zhou J."/>
            <person name="Zoghbi H."/>
            <person name="Zorilla S."/>
            <person name="Buck D."/>
            <person name="Reinhardt R."/>
            <person name="Poustka A."/>
            <person name="Rosenthal A."/>
            <person name="Lehrach H."/>
            <person name="Meindl A."/>
            <person name="Minx P.J."/>
            <person name="Hillier L.W."/>
            <person name="Willard H.F."/>
            <person name="Wilson R.K."/>
            <person name="Waterston R.H."/>
            <person name="Rice C.M."/>
            <person name="Vaudin M."/>
            <person name="Coulson A."/>
            <person name="Nelson D.L."/>
            <person name="Weinstock G."/>
            <person name="Sulston J.E."/>
            <person name="Durbin R.M."/>
            <person name="Hubbard T."/>
            <person name="Gibbs R.A."/>
            <person name="Beck S."/>
            <person name="Rogers J."/>
            <person name="Bentley D.R."/>
        </authorList>
    </citation>
    <scope>NUCLEOTIDE SEQUENCE [LARGE SCALE GENOMIC DNA]</scope>
</reference>
<gene>
    <name evidence="2" type="primary">NAP1L6P</name>
    <name type="synonym">NAP1L6</name>
</gene>
<protein>
    <recommendedName>
        <fullName>Putative nucleosome assembly protein 1-like 6</fullName>
    </recommendedName>
</protein>
<feature type="chain" id="PRO_0000317243" description="Putative nucleosome assembly protein 1-like 6">
    <location>
        <begin position="1"/>
        <end position="107"/>
    </location>
</feature>
<feature type="sequence conflict" description="In Ref. 1; AK090915." evidence="1" ref="1">
    <original>A</original>
    <variation>V</variation>
    <location>
        <position position="25"/>
    </location>
</feature>
<dbReference type="EMBL" id="AK090915">
    <property type="status" value="NOT_ANNOTATED_CDS"/>
    <property type="molecule type" value="mRNA"/>
</dbReference>
<dbReference type="EMBL" id="AC004389">
    <property type="status" value="NOT_ANNOTATED_CDS"/>
    <property type="molecule type" value="Genomic_DNA"/>
</dbReference>
<dbReference type="SMR" id="A6NFF2"/>
<dbReference type="BioMuta" id="HGNC:31706"/>
<dbReference type="PaxDb" id="9606-ENSP00000362617"/>
<dbReference type="ProteomicsDB" id="1047"/>
<dbReference type="UCSC" id="uc004ebh.2">
    <property type="organism name" value="human"/>
</dbReference>
<dbReference type="AGR" id="HGNC:31706"/>
<dbReference type="GeneCards" id="NAP1L6P"/>
<dbReference type="HGNC" id="HGNC:31706">
    <property type="gene designation" value="NAP1L6P"/>
</dbReference>
<dbReference type="neXtProt" id="NX_A6NFF2"/>
<dbReference type="eggNOG" id="KOG1507">
    <property type="taxonomic scope" value="Eukaryota"/>
</dbReference>
<dbReference type="HOGENOM" id="CLU_2489233_0_0_1"/>
<dbReference type="InParanoid" id="A6NFF2"/>
<dbReference type="PAN-GO" id="A6NFF2">
    <property type="GO annotations" value="0 GO annotations based on evolutionary models"/>
</dbReference>
<dbReference type="PhylomeDB" id="A6NFF2"/>
<dbReference type="PathwayCommons" id="A6NFF2"/>
<dbReference type="Pharos" id="A6NFF2">
    <property type="development level" value="Tdark"/>
</dbReference>
<dbReference type="Proteomes" id="UP000005640">
    <property type="component" value="Unplaced"/>
</dbReference>
<dbReference type="RNAct" id="A6NFF2">
    <property type="molecule type" value="protein"/>
</dbReference>
<dbReference type="GO" id="GO:0005634">
    <property type="term" value="C:nucleus"/>
    <property type="evidence" value="ECO:0007669"/>
    <property type="project" value="InterPro"/>
</dbReference>
<dbReference type="GO" id="GO:0006334">
    <property type="term" value="P:nucleosome assembly"/>
    <property type="evidence" value="ECO:0007669"/>
    <property type="project" value="InterPro"/>
</dbReference>
<dbReference type="FunFam" id="1.20.5.1500:FF:000001">
    <property type="entry name" value="Nucleosome assembly protein 1-like 1"/>
    <property type="match status" value="1"/>
</dbReference>
<dbReference type="Gene3D" id="1.20.5.1500">
    <property type="match status" value="1"/>
</dbReference>
<dbReference type="InterPro" id="IPR037231">
    <property type="entry name" value="NAP-like_sf"/>
</dbReference>
<dbReference type="InterPro" id="IPR002164">
    <property type="entry name" value="NAP_family"/>
</dbReference>
<dbReference type="Pfam" id="PF00956">
    <property type="entry name" value="NAP"/>
    <property type="match status" value="1"/>
</dbReference>
<dbReference type="SUPFAM" id="SSF143113">
    <property type="entry name" value="NAP-like"/>
    <property type="match status" value="1"/>
</dbReference>
<accession>A6NFF2</accession>
<keyword id="KW-1185">Reference proteome</keyword>
<proteinExistence type="uncertain"/>
<comment type="similarity">
    <text evidence="1">Belongs to the nucleosome assembly protein (NAP) family.</text>
</comment>
<comment type="caution">
    <text evidence="1">Could be the product of a pseudogene.</text>
</comment>